<keyword id="KW-0030">Aminoacyl-tRNA synthetase</keyword>
<keyword id="KW-0067">ATP-binding</keyword>
<keyword id="KW-0963">Cytoplasm</keyword>
<keyword id="KW-0436">Ligase</keyword>
<keyword id="KW-0547">Nucleotide-binding</keyword>
<keyword id="KW-0648">Protein biosynthesis</keyword>
<keyword id="KW-1185">Reference proteome</keyword>
<comment type="catalytic activity">
    <reaction evidence="1">
        <text>tRNA(Arg) + L-arginine + ATP = L-arginyl-tRNA(Arg) + AMP + diphosphate</text>
        <dbReference type="Rhea" id="RHEA:20301"/>
        <dbReference type="Rhea" id="RHEA-COMP:9658"/>
        <dbReference type="Rhea" id="RHEA-COMP:9673"/>
        <dbReference type="ChEBI" id="CHEBI:30616"/>
        <dbReference type="ChEBI" id="CHEBI:32682"/>
        <dbReference type="ChEBI" id="CHEBI:33019"/>
        <dbReference type="ChEBI" id="CHEBI:78442"/>
        <dbReference type="ChEBI" id="CHEBI:78513"/>
        <dbReference type="ChEBI" id="CHEBI:456215"/>
        <dbReference type="EC" id="6.1.1.19"/>
    </reaction>
</comment>
<comment type="subunit">
    <text evidence="1">Monomer.</text>
</comment>
<comment type="subcellular location">
    <subcellularLocation>
        <location evidence="1">Cytoplasm</location>
    </subcellularLocation>
</comment>
<comment type="similarity">
    <text evidence="1">Belongs to the class-I aminoacyl-tRNA synthetase family.</text>
</comment>
<dbReference type="EC" id="6.1.1.19" evidence="1"/>
<dbReference type="EMBL" id="BA000021">
    <property type="protein sequence ID" value="BAC24275.1"/>
    <property type="molecule type" value="Genomic_DNA"/>
</dbReference>
<dbReference type="SMR" id="Q8D372"/>
<dbReference type="STRING" id="36870.gene:10368616"/>
<dbReference type="KEGG" id="wbr:argS"/>
<dbReference type="eggNOG" id="COG0018">
    <property type="taxonomic scope" value="Bacteria"/>
</dbReference>
<dbReference type="HOGENOM" id="CLU_006406_5_1_6"/>
<dbReference type="OrthoDB" id="9803211at2"/>
<dbReference type="Proteomes" id="UP000000562">
    <property type="component" value="Chromosome"/>
</dbReference>
<dbReference type="GO" id="GO:0005737">
    <property type="term" value="C:cytoplasm"/>
    <property type="evidence" value="ECO:0007669"/>
    <property type="project" value="UniProtKB-SubCell"/>
</dbReference>
<dbReference type="GO" id="GO:0004814">
    <property type="term" value="F:arginine-tRNA ligase activity"/>
    <property type="evidence" value="ECO:0007669"/>
    <property type="project" value="UniProtKB-UniRule"/>
</dbReference>
<dbReference type="GO" id="GO:0005524">
    <property type="term" value="F:ATP binding"/>
    <property type="evidence" value="ECO:0007669"/>
    <property type="project" value="UniProtKB-UniRule"/>
</dbReference>
<dbReference type="GO" id="GO:0006420">
    <property type="term" value="P:arginyl-tRNA aminoacylation"/>
    <property type="evidence" value="ECO:0007669"/>
    <property type="project" value="UniProtKB-UniRule"/>
</dbReference>
<dbReference type="FunFam" id="3.40.50.620:FF:000116">
    <property type="entry name" value="Arginine--tRNA ligase"/>
    <property type="match status" value="1"/>
</dbReference>
<dbReference type="FunFam" id="1.10.730.10:FF:000006">
    <property type="entry name" value="Arginyl-tRNA synthetase 2, mitochondrial"/>
    <property type="match status" value="1"/>
</dbReference>
<dbReference type="Gene3D" id="3.30.1360.70">
    <property type="entry name" value="Arginyl tRNA synthetase N-terminal domain"/>
    <property type="match status" value="1"/>
</dbReference>
<dbReference type="Gene3D" id="3.40.50.620">
    <property type="entry name" value="HUPs"/>
    <property type="match status" value="1"/>
</dbReference>
<dbReference type="Gene3D" id="1.10.730.10">
    <property type="entry name" value="Isoleucyl-tRNA Synthetase, Domain 1"/>
    <property type="match status" value="1"/>
</dbReference>
<dbReference type="HAMAP" id="MF_00123">
    <property type="entry name" value="Arg_tRNA_synth"/>
    <property type="match status" value="1"/>
</dbReference>
<dbReference type="InterPro" id="IPR001412">
    <property type="entry name" value="aa-tRNA-synth_I_CS"/>
</dbReference>
<dbReference type="InterPro" id="IPR001278">
    <property type="entry name" value="Arg-tRNA-ligase"/>
</dbReference>
<dbReference type="InterPro" id="IPR005148">
    <property type="entry name" value="Arg-tRNA-synth_N"/>
</dbReference>
<dbReference type="InterPro" id="IPR036695">
    <property type="entry name" value="Arg-tRNA-synth_N_sf"/>
</dbReference>
<dbReference type="InterPro" id="IPR035684">
    <property type="entry name" value="ArgRS_core"/>
</dbReference>
<dbReference type="InterPro" id="IPR008909">
    <property type="entry name" value="DALR_anticod-bd"/>
</dbReference>
<dbReference type="InterPro" id="IPR014729">
    <property type="entry name" value="Rossmann-like_a/b/a_fold"/>
</dbReference>
<dbReference type="InterPro" id="IPR009080">
    <property type="entry name" value="tRNAsynth_Ia_anticodon-bd"/>
</dbReference>
<dbReference type="NCBIfam" id="TIGR00456">
    <property type="entry name" value="argS"/>
    <property type="match status" value="1"/>
</dbReference>
<dbReference type="PANTHER" id="PTHR11956:SF5">
    <property type="entry name" value="ARGININE--TRNA LIGASE, CYTOPLASMIC"/>
    <property type="match status" value="1"/>
</dbReference>
<dbReference type="PANTHER" id="PTHR11956">
    <property type="entry name" value="ARGINYL-TRNA SYNTHETASE"/>
    <property type="match status" value="1"/>
</dbReference>
<dbReference type="Pfam" id="PF03485">
    <property type="entry name" value="Arg_tRNA_synt_N"/>
    <property type="match status" value="1"/>
</dbReference>
<dbReference type="Pfam" id="PF05746">
    <property type="entry name" value="DALR_1"/>
    <property type="match status" value="1"/>
</dbReference>
<dbReference type="Pfam" id="PF00750">
    <property type="entry name" value="tRNA-synt_1d"/>
    <property type="match status" value="1"/>
</dbReference>
<dbReference type="PRINTS" id="PR01038">
    <property type="entry name" value="TRNASYNTHARG"/>
</dbReference>
<dbReference type="SMART" id="SM01016">
    <property type="entry name" value="Arg_tRNA_synt_N"/>
    <property type="match status" value="1"/>
</dbReference>
<dbReference type="SMART" id="SM00836">
    <property type="entry name" value="DALR_1"/>
    <property type="match status" value="1"/>
</dbReference>
<dbReference type="SUPFAM" id="SSF47323">
    <property type="entry name" value="Anticodon-binding domain of a subclass of class I aminoacyl-tRNA synthetases"/>
    <property type="match status" value="1"/>
</dbReference>
<dbReference type="SUPFAM" id="SSF55190">
    <property type="entry name" value="Arginyl-tRNA synthetase (ArgRS), N-terminal 'additional' domain"/>
    <property type="match status" value="1"/>
</dbReference>
<dbReference type="SUPFAM" id="SSF52374">
    <property type="entry name" value="Nucleotidylyl transferase"/>
    <property type="match status" value="1"/>
</dbReference>
<dbReference type="PROSITE" id="PS00178">
    <property type="entry name" value="AA_TRNA_LIGASE_I"/>
    <property type="match status" value="1"/>
</dbReference>
<evidence type="ECO:0000255" key="1">
    <source>
        <dbReference type="HAMAP-Rule" id="MF_00123"/>
    </source>
</evidence>
<gene>
    <name evidence="1" type="primary">argS</name>
    <name type="ordered locus">WIGBR1290</name>
</gene>
<feature type="chain" id="PRO_0000151636" description="Arginine--tRNA ligase">
    <location>
        <begin position="1"/>
        <end position="576"/>
    </location>
</feature>
<feature type="short sequence motif" description="'HIGH' region">
    <location>
        <begin position="123"/>
        <end position="133"/>
    </location>
</feature>
<proteinExistence type="inferred from homology"/>
<reference key="1">
    <citation type="journal article" date="2002" name="Nat. Genet.">
        <title>Genome sequence of the endocellular obligate symbiont of tsetse flies, Wigglesworthia glossinidia.</title>
        <authorList>
            <person name="Akman L."/>
            <person name="Yamashita A."/>
            <person name="Watanabe H."/>
            <person name="Oshima K."/>
            <person name="Shiba T."/>
            <person name="Hattori M."/>
            <person name="Aksoy S."/>
        </authorList>
    </citation>
    <scope>NUCLEOTIDE SEQUENCE [LARGE SCALE GENOMIC DNA]</scope>
</reference>
<accession>Q8D372</accession>
<sequence>MNIKNILLKNVKNALKPSNLDLRNLKIKKTKFKKFGNYQIDGIFSILNKNKINLNELLNKILPIINMKLINVSEKIEFVKPGYINIFLKKSWIEDNLLKIYHSNKLGISKLKKKTIIIDYSSPNIGKEMHVGHMRSTIIGDSISLILELLGHKVIRANHIGDWGNQFGMLLAYFNEKQNLKFSEITCTDLENYYINAKKKYDKDLEFKKKSQFFTLKLQKKEKDCINIWKKITNLSIENNQKIYDQLNIKLNKTHIMGESLYNDFVPYIISDLPKKNLAINKSGNIMVILNNFKNKQGKSMGVILKKRNGTYLYSVIDIACIKYRYDFFKAQKIIYYTDSRQSQHLLQVFDIVRKAKYIPNFVKLEHHKFGMVLKKDKTPFKTRSGDTIKLSDLLKKSKEKAKKLIIKKNPNTSIDEIESLSQAIGIGSIKYFELSKNRETDYIFNWDNILSFNGNTAPYIQYAYTRVISLIKKNKLKNKNNVKFLLKKEEEIDLSICLLQFEEIINDVSKLGTPHILCNYLYDLSKTFSVFYENCSIIKTKEESVKNSRLFLSILTSRTLKVGLELLGIPMVEKM</sequence>
<organism>
    <name type="scientific">Wigglesworthia glossinidia brevipalpis</name>
    <dbReference type="NCBI Taxonomy" id="36870"/>
    <lineage>
        <taxon>Bacteria</taxon>
        <taxon>Pseudomonadati</taxon>
        <taxon>Pseudomonadota</taxon>
        <taxon>Gammaproteobacteria</taxon>
        <taxon>Enterobacterales</taxon>
        <taxon>Erwiniaceae</taxon>
        <taxon>Wigglesworthia</taxon>
    </lineage>
</organism>
<name>SYR_WIGBR</name>
<protein>
    <recommendedName>
        <fullName evidence="1">Arginine--tRNA ligase</fullName>
        <ecNumber evidence="1">6.1.1.19</ecNumber>
    </recommendedName>
    <alternativeName>
        <fullName evidence="1">Arginyl-tRNA synthetase</fullName>
        <shortName evidence="1">ArgRS</shortName>
    </alternativeName>
</protein>